<gene>
    <name evidence="1" type="primary">proA</name>
    <name type="ordered locus">YPK_3287</name>
</gene>
<proteinExistence type="inferred from homology"/>
<evidence type="ECO:0000255" key="1">
    <source>
        <dbReference type="HAMAP-Rule" id="MF_00412"/>
    </source>
</evidence>
<protein>
    <recommendedName>
        <fullName evidence="1">Gamma-glutamyl phosphate reductase</fullName>
        <shortName evidence="1">GPR</shortName>
        <ecNumber evidence="1">1.2.1.41</ecNumber>
    </recommendedName>
    <alternativeName>
        <fullName evidence="1">Glutamate-5-semialdehyde dehydrogenase</fullName>
    </alternativeName>
    <alternativeName>
        <fullName evidence="1">Glutamyl-gamma-semialdehyde dehydrogenase</fullName>
        <shortName evidence="1">GSA dehydrogenase</shortName>
    </alternativeName>
</protein>
<comment type="function">
    <text evidence="1">Catalyzes the NADPH-dependent reduction of L-glutamate 5-phosphate into L-glutamate 5-semialdehyde and phosphate. The product spontaneously undergoes cyclization to form 1-pyrroline-5-carboxylate.</text>
</comment>
<comment type="catalytic activity">
    <reaction evidence="1">
        <text>L-glutamate 5-semialdehyde + phosphate + NADP(+) = L-glutamyl 5-phosphate + NADPH + H(+)</text>
        <dbReference type="Rhea" id="RHEA:19541"/>
        <dbReference type="ChEBI" id="CHEBI:15378"/>
        <dbReference type="ChEBI" id="CHEBI:43474"/>
        <dbReference type="ChEBI" id="CHEBI:57783"/>
        <dbReference type="ChEBI" id="CHEBI:58066"/>
        <dbReference type="ChEBI" id="CHEBI:58274"/>
        <dbReference type="ChEBI" id="CHEBI:58349"/>
        <dbReference type="EC" id="1.2.1.41"/>
    </reaction>
</comment>
<comment type="pathway">
    <text evidence="1">Amino-acid biosynthesis; L-proline biosynthesis; L-glutamate 5-semialdehyde from L-glutamate: step 2/2.</text>
</comment>
<comment type="subcellular location">
    <subcellularLocation>
        <location evidence="1">Cytoplasm</location>
    </subcellularLocation>
</comment>
<comment type="similarity">
    <text evidence="1">Belongs to the gamma-glutamyl phosphate reductase family.</text>
</comment>
<reference key="1">
    <citation type="submission" date="2008-02" db="EMBL/GenBank/DDBJ databases">
        <title>Complete sequence of Yersinia pseudotuberculosis YPIII.</title>
        <authorList>
            <consortium name="US DOE Joint Genome Institute"/>
            <person name="Copeland A."/>
            <person name="Lucas S."/>
            <person name="Lapidus A."/>
            <person name="Glavina del Rio T."/>
            <person name="Dalin E."/>
            <person name="Tice H."/>
            <person name="Bruce D."/>
            <person name="Goodwin L."/>
            <person name="Pitluck S."/>
            <person name="Munk A.C."/>
            <person name="Brettin T."/>
            <person name="Detter J.C."/>
            <person name="Han C."/>
            <person name="Tapia R."/>
            <person name="Schmutz J."/>
            <person name="Larimer F."/>
            <person name="Land M."/>
            <person name="Hauser L."/>
            <person name="Challacombe J.F."/>
            <person name="Green L."/>
            <person name="Lindler L.E."/>
            <person name="Nikolich M.P."/>
            <person name="Richardson P."/>
        </authorList>
    </citation>
    <scope>NUCLEOTIDE SEQUENCE [LARGE SCALE GENOMIC DNA]</scope>
    <source>
        <strain>YPIII</strain>
    </source>
</reference>
<organism>
    <name type="scientific">Yersinia pseudotuberculosis serotype O:3 (strain YPIII)</name>
    <dbReference type="NCBI Taxonomy" id="502800"/>
    <lineage>
        <taxon>Bacteria</taxon>
        <taxon>Pseudomonadati</taxon>
        <taxon>Pseudomonadota</taxon>
        <taxon>Gammaproteobacteria</taxon>
        <taxon>Enterobacterales</taxon>
        <taxon>Yersiniaceae</taxon>
        <taxon>Yersinia</taxon>
    </lineage>
</organism>
<name>PROA_YERPY</name>
<keyword id="KW-0028">Amino-acid biosynthesis</keyword>
<keyword id="KW-0963">Cytoplasm</keyword>
<keyword id="KW-0521">NADP</keyword>
<keyword id="KW-0560">Oxidoreductase</keyword>
<keyword id="KW-0641">Proline biosynthesis</keyword>
<accession>B1JIH2</accession>
<sequence>MNLLEHMGKAAKQASWQLAMLSTAKKNQALAVIANLLESESQTILQANERDMAAARESGMSEALLDRLLLTPARLAAIANDVRQVCRLNDPVGRVIDGSLLDSGLKLERRRVPLGVIGVIYEARPNVTIDVASLCLKTGNAVILRGGKETHHTNQATVNVIQRALEQCGLPAAAVQAIESPDRQLVNELLRLDRYVDMLIPRGGASLHKLCREQSTIPVITGGIGVCHTFVDENADFEKALLVIENAKIQRPSACNSLETLLVHQAVAKTFLPLLSARMHAFGVTLHASPLAMPYLADGKAKVVAVEAADYDDEWLSLDLNVDIVTDIDAAIDHIREHGTSHSDAILTRSLSHAEYFVRAVDSSAVYVNASTRFTDGGQFGLGAEVAVSTQKLHARGPMGLDALTTYKWIGYGDDLVRS</sequence>
<dbReference type="EC" id="1.2.1.41" evidence="1"/>
<dbReference type="EMBL" id="CP000950">
    <property type="protein sequence ID" value="ACA69556.1"/>
    <property type="molecule type" value="Genomic_DNA"/>
</dbReference>
<dbReference type="RefSeq" id="WP_011191846.1">
    <property type="nucleotide sequence ID" value="NZ_CP009792.1"/>
</dbReference>
<dbReference type="SMR" id="B1JIH2"/>
<dbReference type="KEGG" id="ypy:YPK_3287"/>
<dbReference type="PATRIC" id="fig|502800.11.peg.4020"/>
<dbReference type="UniPathway" id="UPA00098">
    <property type="reaction ID" value="UER00360"/>
</dbReference>
<dbReference type="GO" id="GO:0005737">
    <property type="term" value="C:cytoplasm"/>
    <property type="evidence" value="ECO:0007669"/>
    <property type="project" value="UniProtKB-SubCell"/>
</dbReference>
<dbReference type="GO" id="GO:0004350">
    <property type="term" value="F:glutamate-5-semialdehyde dehydrogenase activity"/>
    <property type="evidence" value="ECO:0007669"/>
    <property type="project" value="UniProtKB-UniRule"/>
</dbReference>
<dbReference type="GO" id="GO:0050661">
    <property type="term" value="F:NADP binding"/>
    <property type="evidence" value="ECO:0007669"/>
    <property type="project" value="InterPro"/>
</dbReference>
<dbReference type="GO" id="GO:0055129">
    <property type="term" value="P:L-proline biosynthetic process"/>
    <property type="evidence" value="ECO:0007669"/>
    <property type="project" value="UniProtKB-UniRule"/>
</dbReference>
<dbReference type="CDD" id="cd07079">
    <property type="entry name" value="ALDH_F18-19_ProA-GPR"/>
    <property type="match status" value="1"/>
</dbReference>
<dbReference type="FunFam" id="3.40.309.10:FF:000006">
    <property type="entry name" value="Gamma-glutamyl phosphate reductase"/>
    <property type="match status" value="1"/>
</dbReference>
<dbReference type="Gene3D" id="3.40.605.10">
    <property type="entry name" value="Aldehyde Dehydrogenase, Chain A, domain 1"/>
    <property type="match status" value="1"/>
</dbReference>
<dbReference type="Gene3D" id="3.40.309.10">
    <property type="entry name" value="Aldehyde Dehydrogenase, Chain A, domain 2"/>
    <property type="match status" value="1"/>
</dbReference>
<dbReference type="HAMAP" id="MF_00412">
    <property type="entry name" value="ProA"/>
    <property type="match status" value="1"/>
</dbReference>
<dbReference type="InterPro" id="IPR016161">
    <property type="entry name" value="Ald_DH/histidinol_DH"/>
</dbReference>
<dbReference type="InterPro" id="IPR016163">
    <property type="entry name" value="Ald_DH_C"/>
</dbReference>
<dbReference type="InterPro" id="IPR016162">
    <property type="entry name" value="Ald_DH_N"/>
</dbReference>
<dbReference type="InterPro" id="IPR015590">
    <property type="entry name" value="Aldehyde_DH_dom"/>
</dbReference>
<dbReference type="InterPro" id="IPR020593">
    <property type="entry name" value="G-glutamylP_reductase_CS"/>
</dbReference>
<dbReference type="InterPro" id="IPR012134">
    <property type="entry name" value="Glu-5-SA_DH"/>
</dbReference>
<dbReference type="InterPro" id="IPR000965">
    <property type="entry name" value="GPR_dom"/>
</dbReference>
<dbReference type="NCBIfam" id="NF001221">
    <property type="entry name" value="PRK00197.1"/>
    <property type="match status" value="1"/>
</dbReference>
<dbReference type="NCBIfam" id="TIGR00407">
    <property type="entry name" value="proA"/>
    <property type="match status" value="1"/>
</dbReference>
<dbReference type="PANTHER" id="PTHR11063:SF8">
    <property type="entry name" value="DELTA-1-PYRROLINE-5-CARBOXYLATE SYNTHASE"/>
    <property type="match status" value="1"/>
</dbReference>
<dbReference type="PANTHER" id="PTHR11063">
    <property type="entry name" value="GLUTAMATE SEMIALDEHYDE DEHYDROGENASE"/>
    <property type="match status" value="1"/>
</dbReference>
<dbReference type="Pfam" id="PF00171">
    <property type="entry name" value="Aldedh"/>
    <property type="match status" value="1"/>
</dbReference>
<dbReference type="PIRSF" id="PIRSF000151">
    <property type="entry name" value="GPR"/>
    <property type="match status" value="1"/>
</dbReference>
<dbReference type="SUPFAM" id="SSF53720">
    <property type="entry name" value="ALDH-like"/>
    <property type="match status" value="1"/>
</dbReference>
<dbReference type="PROSITE" id="PS01223">
    <property type="entry name" value="PROA"/>
    <property type="match status" value="1"/>
</dbReference>
<feature type="chain" id="PRO_1000193681" description="Gamma-glutamyl phosphate reductase">
    <location>
        <begin position="1"/>
        <end position="419"/>
    </location>
</feature>